<accession>E2RSQ2</accession>
<evidence type="ECO:0000250" key="1"/>
<evidence type="ECO:0000250" key="2">
    <source>
        <dbReference type="UniProtKB" id="Q9D5T7"/>
    </source>
</evidence>
<evidence type="ECO:0000255" key="3">
    <source>
        <dbReference type="PROSITE-ProRule" id="PRU00109"/>
    </source>
</evidence>
<evidence type="ECO:0000256" key="4">
    <source>
        <dbReference type="SAM" id="MobiDB-lite"/>
    </source>
</evidence>
<proteinExistence type="inferred from homology"/>
<gene>
    <name type="primary">HORMAD1</name>
</gene>
<organism>
    <name type="scientific">Canis lupus familiaris</name>
    <name type="common">Dog</name>
    <name type="synonym">Canis familiaris</name>
    <dbReference type="NCBI Taxonomy" id="9615"/>
    <lineage>
        <taxon>Eukaryota</taxon>
        <taxon>Metazoa</taxon>
        <taxon>Chordata</taxon>
        <taxon>Craniata</taxon>
        <taxon>Vertebrata</taxon>
        <taxon>Euteleostomi</taxon>
        <taxon>Mammalia</taxon>
        <taxon>Eutheria</taxon>
        <taxon>Laurasiatheria</taxon>
        <taxon>Carnivora</taxon>
        <taxon>Caniformia</taxon>
        <taxon>Canidae</taxon>
        <taxon>Canis</taxon>
    </lineage>
</organism>
<keyword id="KW-0158">Chromosome</keyword>
<keyword id="KW-0221">Differentiation</keyword>
<keyword id="KW-0469">Meiosis</keyword>
<keyword id="KW-0539">Nucleus</keyword>
<keyword id="KW-0896">Oogenesis</keyword>
<keyword id="KW-0597">Phosphoprotein</keyword>
<keyword id="KW-1185">Reference proteome</keyword>
<keyword id="KW-0744">Spermatogenesis</keyword>
<reference key="1">
    <citation type="journal article" date="2005" name="Nature">
        <title>Genome sequence, comparative analysis and haplotype structure of the domestic dog.</title>
        <authorList>
            <person name="Lindblad-Toh K."/>
            <person name="Wade C.M."/>
            <person name="Mikkelsen T.S."/>
            <person name="Karlsson E.K."/>
            <person name="Jaffe D.B."/>
            <person name="Kamal M."/>
            <person name="Clamp M."/>
            <person name="Chang J.L."/>
            <person name="Kulbokas E.J. III"/>
            <person name="Zody M.C."/>
            <person name="Mauceli E."/>
            <person name="Xie X."/>
            <person name="Breen M."/>
            <person name="Wayne R.K."/>
            <person name="Ostrander E.A."/>
            <person name="Ponting C.P."/>
            <person name="Galibert F."/>
            <person name="Smith D.R."/>
            <person name="deJong P.J."/>
            <person name="Kirkness E.F."/>
            <person name="Alvarez P."/>
            <person name="Biagi T."/>
            <person name="Brockman W."/>
            <person name="Butler J."/>
            <person name="Chin C.-W."/>
            <person name="Cook A."/>
            <person name="Cuff J."/>
            <person name="Daly M.J."/>
            <person name="DeCaprio D."/>
            <person name="Gnerre S."/>
            <person name="Grabherr M."/>
            <person name="Kellis M."/>
            <person name="Kleber M."/>
            <person name="Bardeleben C."/>
            <person name="Goodstadt L."/>
            <person name="Heger A."/>
            <person name="Hitte C."/>
            <person name="Kim L."/>
            <person name="Koepfli K.-P."/>
            <person name="Parker H.G."/>
            <person name="Pollinger J.P."/>
            <person name="Searle S.M.J."/>
            <person name="Sutter N.B."/>
            <person name="Thomas R."/>
            <person name="Webber C."/>
            <person name="Baldwin J."/>
            <person name="Abebe A."/>
            <person name="Abouelleil A."/>
            <person name="Aftuck L."/>
            <person name="Ait-Zahra M."/>
            <person name="Aldredge T."/>
            <person name="Allen N."/>
            <person name="An P."/>
            <person name="Anderson S."/>
            <person name="Antoine C."/>
            <person name="Arachchi H."/>
            <person name="Aslam A."/>
            <person name="Ayotte L."/>
            <person name="Bachantsang P."/>
            <person name="Barry A."/>
            <person name="Bayul T."/>
            <person name="Benamara M."/>
            <person name="Berlin A."/>
            <person name="Bessette D."/>
            <person name="Blitshteyn B."/>
            <person name="Bloom T."/>
            <person name="Blye J."/>
            <person name="Boguslavskiy L."/>
            <person name="Bonnet C."/>
            <person name="Boukhgalter B."/>
            <person name="Brown A."/>
            <person name="Cahill P."/>
            <person name="Calixte N."/>
            <person name="Camarata J."/>
            <person name="Cheshatsang Y."/>
            <person name="Chu J."/>
            <person name="Citroen M."/>
            <person name="Collymore A."/>
            <person name="Cooke P."/>
            <person name="Dawoe T."/>
            <person name="Daza R."/>
            <person name="Decktor K."/>
            <person name="DeGray S."/>
            <person name="Dhargay N."/>
            <person name="Dooley K."/>
            <person name="Dooley K."/>
            <person name="Dorje P."/>
            <person name="Dorjee K."/>
            <person name="Dorris L."/>
            <person name="Duffey N."/>
            <person name="Dupes A."/>
            <person name="Egbiremolen O."/>
            <person name="Elong R."/>
            <person name="Falk J."/>
            <person name="Farina A."/>
            <person name="Faro S."/>
            <person name="Ferguson D."/>
            <person name="Ferreira P."/>
            <person name="Fisher S."/>
            <person name="FitzGerald M."/>
            <person name="Foley K."/>
            <person name="Foley C."/>
            <person name="Franke A."/>
            <person name="Friedrich D."/>
            <person name="Gage D."/>
            <person name="Garber M."/>
            <person name="Gearin G."/>
            <person name="Giannoukos G."/>
            <person name="Goode T."/>
            <person name="Goyette A."/>
            <person name="Graham J."/>
            <person name="Grandbois E."/>
            <person name="Gyaltsen K."/>
            <person name="Hafez N."/>
            <person name="Hagopian D."/>
            <person name="Hagos B."/>
            <person name="Hall J."/>
            <person name="Healy C."/>
            <person name="Hegarty R."/>
            <person name="Honan T."/>
            <person name="Horn A."/>
            <person name="Houde N."/>
            <person name="Hughes L."/>
            <person name="Hunnicutt L."/>
            <person name="Husby M."/>
            <person name="Jester B."/>
            <person name="Jones C."/>
            <person name="Kamat A."/>
            <person name="Kanga B."/>
            <person name="Kells C."/>
            <person name="Khazanovich D."/>
            <person name="Kieu A.C."/>
            <person name="Kisner P."/>
            <person name="Kumar M."/>
            <person name="Lance K."/>
            <person name="Landers T."/>
            <person name="Lara M."/>
            <person name="Lee W."/>
            <person name="Leger J.-P."/>
            <person name="Lennon N."/>
            <person name="Leuper L."/>
            <person name="LeVine S."/>
            <person name="Liu J."/>
            <person name="Liu X."/>
            <person name="Lokyitsang Y."/>
            <person name="Lokyitsang T."/>
            <person name="Lui A."/>
            <person name="Macdonald J."/>
            <person name="Major J."/>
            <person name="Marabella R."/>
            <person name="Maru K."/>
            <person name="Matthews C."/>
            <person name="McDonough S."/>
            <person name="Mehta T."/>
            <person name="Meldrim J."/>
            <person name="Melnikov A."/>
            <person name="Meneus L."/>
            <person name="Mihalev A."/>
            <person name="Mihova T."/>
            <person name="Miller K."/>
            <person name="Mittelman R."/>
            <person name="Mlenga V."/>
            <person name="Mulrain L."/>
            <person name="Munson G."/>
            <person name="Navidi A."/>
            <person name="Naylor J."/>
            <person name="Nguyen T."/>
            <person name="Nguyen N."/>
            <person name="Nguyen C."/>
            <person name="Nguyen T."/>
            <person name="Nicol R."/>
            <person name="Norbu N."/>
            <person name="Norbu C."/>
            <person name="Novod N."/>
            <person name="Nyima T."/>
            <person name="Olandt P."/>
            <person name="O'Neill B."/>
            <person name="O'Neill K."/>
            <person name="Osman S."/>
            <person name="Oyono L."/>
            <person name="Patti C."/>
            <person name="Perrin D."/>
            <person name="Phunkhang P."/>
            <person name="Pierre F."/>
            <person name="Priest M."/>
            <person name="Rachupka A."/>
            <person name="Raghuraman S."/>
            <person name="Rameau R."/>
            <person name="Ray V."/>
            <person name="Raymond C."/>
            <person name="Rege F."/>
            <person name="Rise C."/>
            <person name="Rogers J."/>
            <person name="Rogov P."/>
            <person name="Sahalie J."/>
            <person name="Settipalli S."/>
            <person name="Sharpe T."/>
            <person name="Shea T."/>
            <person name="Sheehan M."/>
            <person name="Sherpa N."/>
            <person name="Shi J."/>
            <person name="Shih D."/>
            <person name="Sloan J."/>
            <person name="Smith C."/>
            <person name="Sparrow T."/>
            <person name="Stalker J."/>
            <person name="Stange-Thomann N."/>
            <person name="Stavropoulos S."/>
            <person name="Stone C."/>
            <person name="Stone S."/>
            <person name="Sykes S."/>
            <person name="Tchuinga P."/>
            <person name="Tenzing P."/>
            <person name="Tesfaye S."/>
            <person name="Thoulutsang D."/>
            <person name="Thoulutsang Y."/>
            <person name="Topham K."/>
            <person name="Topping I."/>
            <person name="Tsamla T."/>
            <person name="Vassiliev H."/>
            <person name="Venkataraman V."/>
            <person name="Vo A."/>
            <person name="Wangchuk T."/>
            <person name="Wangdi T."/>
            <person name="Weiand M."/>
            <person name="Wilkinson J."/>
            <person name="Wilson A."/>
            <person name="Yadav S."/>
            <person name="Yang S."/>
            <person name="Yang X."/>
            <person name="Young G."/>
            <person name="Yu Q."/>
            <person name="Zainoun J."/>
            <person name="Zembek L."/>
            <person name="Zimmer A."/>
            <person name="Lander E.S."/>
        </authorList>
    </citation>
    <scope>NUCLEOTIDE SEQUENCE [LARGE SCALE GENOMIC DNA]</scope>
    <source>
        <strain>Boxer</strain>
    </source>
</reference>
<dbReference type="SMR" id="E2RSQ2"/>
<dbReference type="FunCoup" id="E2RSQ2">
    <property type="interactions" value="8"/>
</dbReference>
<dbReference type="STRING" id="9615.ENSCAFP00000017772"/>
<dbReference type="PaxDb" id="9612-ENSCAFP00000017772"/>
<dbReference type="eggNOG" id="KOG4652">
    <property type="taxonomic scope" value="Eukaryota"/>
</dbReference>
<dbReference type="InParanoid" id="E2RSQ2"/>
<dbReference type="OrthoDB" id="1928087at2759"/>
<dbReference type="Proteomes" id="UP000002254">
    <property type="component" value="Unplaced"/>
</dbReference>
<dbReference type="Proteomes" id="UP000694429">
    <property type="component" value="Unplaced"/>
</dbReference>
<dbReference type="Proteomes" id="UP000694542">
    <property type="component" value="Unplaced"/>
</dbReference>
<dbReference type="Proteomes" id="UP000805418">
    <property type="component" value="Unplaced"/>
</dbReference>
<dbReference type="GO" id="GO:0005694">
    <property type="term" value="C:chromosome"/>
    <property type="evidence" value="ECO:0000250"/>
    <property type="project" value="UniProtKB"/>
</dbReference>
<dbReference type="GO" id="GO:0005634">
    <property type="term" value="C:nucleus"/>
    <property type="evidence" value="ECO:0000250"/>
    <property type="project" value="UniProtKB"/>
</dbReference>
<dbReference type="GO" id="GO:0001824">
    <property type="term" value="P:blastocyst development"/>
    <property type="evidence" value="ECO:0000250"/>
    <property type="project" value="UniProtKB"/>
</dbReference>
<dbReference type="GO" id="GO:0051321">
    <property type="term" value="P:meiotic cell cycle"/>
    <property type="evidence" value="ECO:0000250"/>
    <property type="project" value="UniProtKB"/>
</dbReference>
<dbReference type="GO" id="GO:0042138">
    <property type="term" value="P:meiotic DNA double-strand break formation"/>
    <property type="evidence" value="ECO:0000250"/>
    <property type="project" value="UniProtKB"/>
</dbReference>
<dbReference type="GO" id="GO:0051598">
    <property type="term" value="P:meiotic recombination checkpoint signaling"/>
    <property type="evidence" value="ECO:0000250"/>
    <property type="project" value="UniProtKB"/>
</dbReference>
<dbReference type="GO" id="GO:0051177">
    <property type="term" value="P:meiotic sister chromatid cohesion"/>
    <property type="evidence" value="ECO:0000250"/>
    <property type="project" value="UniProtKB"/>
</dbReference>
<dbReference type="GO" id="GO:0048477">
    <property type="term" value="P:oogenesis"/>
    <property type="evidence" value="ECO:0000250"/>
    <property type="project" value="UniProtKB"/>
</dbReference>
<dbReference type="GO" id="GO:0060629">
    <property type="term" value="P:regulation of homologous chromosome segregation"/>
    <property type="evidence" value="ECO:0000250"/>
    <property type="project" value="UniProtKB"/>
</dbReference>
<dbReference type="GO" id="GO:0007283">
    <property type="term" value="P:spermatogenesis"/>
    <property type="evidence" value="ECO:0000250"/>
    <property type="project" value="UniProtKB"/>
</dbReference>
<dbReference type="GO" id="GO:0007130">
    <property type="term" value="P:synaptonemal complex assembly"/>
    <property type="evidence" value="ECO:0000250"/>
    <property type="project" value="UniProtKB"/>
</dbReference>
<dbReference type="FunFam" id="3.30.900.10:FF:000006">
    <property type="entry name" value="HORMA domain-containing protein 1"/>
    <property type="match status" value="1"/>
</dbReference>
<dbReference type="Gene3D" id="3.30.900.10">
    <property type="entry name" value="HORMA domain"/>
    <property type="match status" value="1"/>
</dbReference>
<dbReference type="InterPro" id="IPR003511">
    <property type="entry name" value="HORMA_dom"/>
</dbReference>
<dbReference type="InterPro" id="IPR036570">
    <property type="entry name" value="HORMA_dom_sf"/>
</dbReference>
<dbReference type="InterPro" id="IPR051294">
    <property type="entry name" value="HORMA_MeioticProgression"/>
</dbReference>
<dbReference type="PANTHER" id="PTHR48225">
    <property type="entry name" value="HORMA DOMAIN-CONTAINING PROTEIN 1"/>
    <property type="match status" value="1"/>
</dbReference>
<dbReference type="PANTHER" id="PTHR48225:SF1">
    <property type="entry name" value="HORMA DOMAIN-CONTAINING PROTEIN 1"/>
    <property type="match status" value="1"/>
</dbReference>
<dbReference type="Pfam" id="PF02301">
    <property type="entry name" value="HORMA"/>
    <property type="match status" value="1"/>
</dbReference>
<dbReference type="SUPFAM" id="SSF56019">
    <property type="entry name" value="The spindle assembly checkpoint protein mad2"/>
    <property type="match status" value="1"/>
</dbReference>
<dbReference type="PROSITE" id="PS50815">
    <property type="entry name" value="HORMA"/>
    <property type="match status" value="1"/>
</dbReference>
<sequence length="395" mass="44926">MATAQLQRTSMSALVFPNKISTEQQSLVLVKRLLAVSVSCITYLRGIFPECAYGTRYLDDLCVKILREDKNCPGSTQLVKWMLGCYDALQKKYLRMVVLAVYTNPEDPQTISECYQFKFKYASNGPVMDFISKNQSSESSMSSADTKKASILLIRKIYILMQNLGPLPNDVCLTMKLFYYDEVTPPDYQPPGFKDGDCEGVIFEGEPMYLNVGEVPTPFHTFKVKVTTEKERMENIDSAILSPKQLKTPLQKILMDKDDVADEQEHYISDDFDVETKMEEQKRNLGSSELGEPSLVCEEDEIMRSKESLDLSISHSQVEQLVSKTSELDVSESKTRSGKIFQNKMANGNQPVKSSKENRKRNQLESGKTVLYHFDSSSQESVPKRRKFSEPKEYV</sequence>
<feature type="chain" id="PRO_0000410912" description="HORMA domain-containing protein 1">
    <location>
        <begin position="1"/>
        <end position="395"/>
    </location>
</feature>
<feature type="domain" description="HORMA" evidence="3">
    <location>
        <begin position="24"/>
        <end position="226"/>
    </location>
</feature>
<feature type="region of interest" description="Disordered" evidence="4">
    <location>
        <begin position="329"/>
        <end position="395"/>
    </location>
</feature>
<feature type="short sequence motif" description="Nuclear localization signal" evidence="1">
    <location>
        <begin position="384"/>
        <end position="387"/>
    </location>
</feature>
<feature type="compositionally biased region" description="Polar residues" evidence="4">
    <location>
        <begin position="344"/>
        <end position="353"/>
    </location>
</feature>
<feature type="compositionally biased region" description="Basic and acidic residues" evidence="4">
    <location>
        <begin position="354"/>
        <end position="363"/>
    </location>
</feature>
<feature type="modified residue" description="Phosphoserine" evidence="2">
    <location>
        <position position="377"/>
    </location>
</feature>
<protein>
    <recommendedName>
        <fullName>HORMA domain-containing protein 1</fullName>
    </recommendedName>
</protein>
<comment type="function">
    <text evidence="2">Plays a key role in meiotic progression. Regulates 3 different functions during meiosis: ensures that sufficient numbers of processed DNA double-strand breaks (DSBs) are available for successful homology search by increasing the steady-state numbers of single-stranded DSB ends. Promotes synaptonemal-complex formation independently of its role in homology search. Plays a key role in the male mid-pachytene checkpoint and the female meiotic prophase checkpoint: required for efficient build-up of ATR activity on unsynapsed chromosome regions, a process believed to form the basis of meiotic silencing of unsynapsed chromatin (MSUC) and meiotic prophase quality control in both sexes.</text>
</comment>
<comment type="subunit">
    <text evidence="2">Interacts with HORMAD2. Interacts with IHO1.</text>
</comment>
<comment type="subcellular location">
    <subcellularLocation>
        <location evidence="2">Nucleus</location>
    </subcellularLocation>
    <subcellularLocation>
        <location evidence="2">Chromosome</location>
    </subcellularLocation>
    <text evidence="2">Preferentially localizes to unsynapsed or desynapsed chromosomal regions during the prophase I stage of meiosis. TRIP13 is required for depletion from synapsed chromosomes. The expression of the phosphorylated form at Ser-378 is restricted to unsynapsed chromosomal regions (By similarity).</text>
</comment>
<comment type="PTM">
    <text evidence="2">Phosphorylated at Ser-378 in a SPO11-dependent manner.</text>
</comment>
<name>HORM1_CANLF</name>